<gene>
    <name evidence="1" type="primary">murD</name>
    <name type="ordered locus">CCNA_02639</name>
</gene>
<name>MURD_CAUVN</name>
<keyword id="KW-0067">ATP-binding</keyword>
<keyword id="KW-0131">Cell cycle</keyword>
<keyword id="KW-0132">Cell division</keyword>
<keyword id="KW-0133">Cell shape</keyword>
<keyword id="KW-0961">Cell wall biogenesis/degradation</keyword>
<keyword id="KW-0963">Cytoplasm</keyword>
<keyword id="KW-0436">Ligase</keyword>
<keyword id="KW-0547">Nucleotide-binding</keyword>
<keyword id="KW-0573">Peptidoglycan synthesis</keyword>
<keyword id="KW-1185">Reference proteome</keyword>
<feature type="chain" id="PRO_1000147398" description="UDP-N-acetylmuramoylalanine--D-glutamate ligase">
    <location>
        <begin position="1"/>
        <end position="471"/>
    </location>
</feature>
<feature type="binding site" evidence="1">
    <location>
        <begin position="123"/>
        <end position="129"/>
    </location>
    <ligand>
        <name>ATP</name>
        <dbReference type="ChEBI" id="CHEBI:30616"/>
    </ligand>
</feature>
<sequence>MIPVRGFEDKTVAVFGLGRTGLTAARALIAGGAKVALWDEKPASREAAAAEGFAVVDLQAADWSQFAALMLSPGVPLSHPKPHWTVEKARAAGVEVLGDVELFARTVNAAPAHKRPKIIAITGTNGKSTTTALIGHLCASAGRDTRVGGNIGLGVLGLEDMHGGAVYVLELSSYQLDLTSSLKPDAVVLLNISPDHLDRHGGMDGYIAAKRRIFLNQGKGDTAIIGVDDAWCQQICTEITAANRRTIWPISAGKAMGRGVYALQGVLYDATGERVVEVADILRARSLPGRHNWQNAAAAYAAARAIGISMQDAVDGLMTFPGLAHRMETVGKIGKVRFVNDSKATNADAARQAMSSYPKFYWIAGGVAKAGGIDDLKDLFPRIAKAYLIGEAAEPFSWTLAGKAECVLSGTLEKAVQQAYADAAASGEEAIVLLSPACASFDQFSDFEARGEAFRAAVNGLTAGGGKAAVA</sequence>
<accession>B8H096</accession>
<comment type="function">
    <text evidence="1">Cell wall formation. Catalyzes the addition of glutamate to the nucleotide precursor UDP-N-acetylmuramoyl-L-alanine (UMA).</text>
</comment>
<comment type="catalytic activity">
    <reaction evidence="1">
        <text>UDP-N-acetyl-alpha-D-muramoyl-L-alanine + D-glutamate + ATP = UDP-N-acetyl-alpha-D-muramoyl-L-alanyl-D-glutamate + ADP + phosphate + H(+)</text>
        <dbReference type="Rhea" id="RHEA:16429"/>
        <dbReference type="ChEBI" id="CHEBI:15378"/>
        <dbReference type="ChEBI" id="CHEBI:29986"/>
        <dbReference type="ChEBI" id="CHEBI:30616"/>
        <dbReference type="ChEBI" id="CHEBI:43474"/>
        <dbReference type="ChEBI" id="CHEBI:83898"/>
        <dbReference type="ChEBI" id="CHEBI:83900"/>
        <dbReference type="ChEBI" id="CHEBI:456216"/>
        <dbReference type="EC" id="6.3.2.9"/>
    </reaction>
</comment>
<comment type="pathway">
    <text evidence="1">Cell wall biogenesis; peptidoglycan biosynthesis.</text>
</comment>
<comment type="subcellular location">
    <subcellularLocation>
        <location evidence="1">Cytoplasm</location>
    </subcellularLocation>
</comment>
<comment type="similarity">
    <text evidence="1">Belongs to the MurCDEF family.</text>
</comment>
<organism>
    <name type="scientific">Caulobacter vibrioides (strain NA1000 / CB15N)</name>
    <name type="common">Caulobacter crescentus</name>
    <dbReference type="NCBI Taxonomy" id="565050"/>
    <lineage>
        <taxon>Bacteria</taxon>
        <taxon>Pseudomonadati</taxon>
        <taxon>Pseudomonadota</taxon>
        <taxon>Alphaproteobacteria</taxon>
        <taxon>Caulobacterales</taxon>
        <taxon>Caulobacteraceae</taxon>
        <taxon>Caulobacter</taxon>
    </lineage>
</organism>
<dbReference type="EC" id="6.3.2.9" evidence="1"/>
<dbReference type="EMBL" id="CP001340">
    <property type="protein sequence ID" value="ACL96104.1"/>
    <property type="molecule type" value="Genomic_DNA"/>
</dbReference>
<dbReference type="RefSeq" id="WP_010920413.1">
    <property type="nucleotide sequence ID" value="NC_011916.1"/>
</dbReference>
<dbReference type="RefSeq" id="YP_002518012.1">
    <property type="nucleotide sequence ID" value="NC_011916.1"/>
</dbReference>
<dbReference type="SMR" id="B8H096"/>
<dbReference type="GeneID" id="7332741"/>
<dbReference type="KEGG" id="ccs:CCNA_02639"/>
<dbReference type="PATRIC" id="fig|565050.3.peg.2587"/>
<dbReference type="HOGENOM" id="CLU_032540_3_0_5"/>
<dbReference type="OrthoDB" id="9809796at2"/>
<dbReference type="PhylomeDB" id="B8H096"/>
<dbReference type="UniPathway" id="UPA00219"/>
<dbReference type="Proteomes" id="UP000001364">
    <property type="component" value="Chromosome"/>
</dbReference>
<dbReference type="GO" id="GO:0005737">
    <property type="term" value="C:cytoplasm"/>
    <property type="evidence" value="ECO:0007669"/>
    <property type="project" value="UniProtKB-SubCell"/>
</dbReference>
<dbReference type="GO" id="GO:0005524">
    <property type="term" value="F:ATP binding"/>
    <property type="evidence" value="ECO:0007669"/>
    <property type="project" value="UniProtKB-UniRule"/>
</dbReference>
<dbReference type="GO" id="GO:0008764">
    <property type="term" value="F:UDP-N-acetylmuramoylalanine-D-glutamate ligase activity"/>
    <property type="evidence" value="ECO:0007669"/>
    <property type="project" value="UniProtKB-UniRule"/>
</dbReference>
<dbReference type="GO" id="GO:0051301">
    <property type="term" value="P:cell division"/>
    <property type="evidence" value="ECO:0007669"/>
    <property type="project" value="UniProtKB-KW"/>
</dbReference>
<dbReference type="GO" id="GO:0071555">
    <property type="term" value="P:cell wall organization"/>
    <property type="evidence" value="ECO:0007669"/>
    <property type="project" value="UniProtKB-KW"/>
</dbReference>
<dbReference type="GO" id="GO:0009252">
    <property type="term" value="P:peptidoglycan biosynthetic process"/>
    <property type="evidence" value="ECO:0007669"/>
    <property type="project" value="UniProtKB-UniRule"/>
</dbReference>
<dbReference type="GO" id="GO:0008360">
    <property type="term" value="P:regulation of cell shape"/>
    <property type="evidence" value="ECO:0007669"/>
    <property type="project" value="UniProtKB-KW"/>
</dbReference>
<dbReference type="Gene3D" id="3.90.190.20">
    <property type="entry name" value="Mur ligase, C-terminal domain"/>
    <property type="match status" value="1"/>
</dbReference>
<dbReference type="Gene3D" id="3.40.1190.10">
    <property type="entry name" value="Mur-like, catalytic domain"/>
    <property type="match status" value="1"/>
</dbReference>
<dbReference type="Gene3D" id="3.40.50.720">
    <property type="entry name" value="NAD(P)-binding Rossmann-like Domain"/>
    <property type="match status" value="1"/>
</dbReference>
<dbReference type="HAMAP" id="MF_00639">
    <property type="entry name" value="MurD"/>
    <property type="match status" value="1"/>
</dbReference>
<dbReference type="InterPro" id="IPR036565">
    <property type="entry name" value="Mur-like_cat_sf"/>
</dbReference>
<dbReference type="InterPro" id="IPR004101">
    <property type="entry name" value="Mur_ligase_C"/>
</dbReference>
<dbReference type="InterPro" id="IPR036615">
    <property type="entry name" value="Mur_ligase_C_dom_sf"/>
</dbReference>
<dbReference type="InterPro" id="IPR013221">
    <property type="entry name" value="Mur_ligase_cen"/>
</dbReference>
<dbReference type="InterPro" id="IPR005762">
    <property type="entry name" value="MurD"/>
</dbReference>
<dbReference type="NCBIfam" id="TIGR01087">
    <property type="entry name" value="murD"/>
    <property type="match status" value="1"/>
</dbReference>
<dbReference type="PANTHER" id="PTHR43692">
    <property type="entry name" value="UDP-N-ACETYLMURAMOYLALANINE--D-GLUTAMATE LIGASE"/>
    <property type="match status" value="1"/>
</dbReference>
<dbReference type="PANTHER" id="PTHR43692:SF1">
    <property type="entry name" value="UDP-N-ACETYLMURAMOYLALANINE--D-GLUTAMATE LIGASE"/>
    <property type="match status" value="1"/>
</dbReference>
<dbReference type="Pfam" id="PF02875">
    <property type="entry name" value="Mur_ligase_C"/>
    <property type="match status" value="1"/>
</dbReference>
<dbReference type="Pfam" id="PF08245">
    <property type="entry name" value="Mur_ligase_M"/>
    <property type="match status" value="1"/>
</dbReference>
<dbReference type="Pfam" id="PF21799">
    <property type="entry name" value="MurD-like_N"/>
    <property type="match status" value="1"/>
</dbReference>
<dbReference type="SUPFAM" id="SSF51984">
    <property type="entry name" value="MurCD N-terminal domain"/>
    <property type="match status" value="1"/>
</dbReference>
<dbReference type="SUPFAM" id="SSF53623">
    <property type="entry name" value="MurD-like peptide ligases, catalytic domain"/>
    <property type="match status" value="1"/>
</dbReference>
<dbReference type="SUPFAM" id="SSF53244">
    <property type="entry name" value="MurD-like peptide ligases, peptide-binding domain"/>
    <property type="match status" value="1"/>
</dbReference>
<proteinExistence type="inferred from homology"/>
<evidence type="ECO:0000255" key="1">
    <source>
        <dbReference type="HAMAP-Rule" id="MF_00639"/>
    </source>
</evidence>
<protein>
    <recommendedName>
        <fullName evidence="1">UDP-N-acetylmuramoylalanine--D-glutamate ligase</fullName>
        <ecNumber evidence="1">6.3.2.9</ecNumber>
    </recommendedName>
    <alternativeName>
        <fullName evidence="1">D-glutamic acid-adding enzyme</fullName>
    </alternativeName>
    <alternativeName>
        <fullName evidence="1">UDP-N-acetylmuramoyl-L-alanyl-D-glutamate synthetase</fullName>
    </alternativeName>
</protein>
<reference key="1">
    <citation type="journal article" date="2010" name="J. Bacteriol.">
        <title>The genetic basis of laboratory adaptation in Caulobacter crescentus.</title>
        <authorList>
            <person name="Marks M.E."/>
            <person name="Castro-Rojas C.M."/>
            <person name="Teiling C."/>
            <person name="Du L."/>
            <person name="Kapatral V."/>
            <person name="Walunas T.L."/>
            <person name="Crosson S."/>
        </authorList>
    </citation>
    <scope>NUCLEOTIDE SEQUENCE [LARGE SCALE GENOMIC DNA]</scope>
    <source>
        <strain>NA1000 / CB15N</strain>
    </source>
</reference>